<comment type="function">
    <text evidence="3">Functions as an activator of NF-kappa-B through increased phosphorylation of the IKK complex. May function in neuronal cells differentiation. May play a role in vesicular transport from endoplasmic reticulum to Golgi.</text>
</comment>
<comment type="subunit">
    <text evidence="1 3">Component of the multisubunit TRAPP (transport protein particle) complex, which includes at least TRAPPC2, TRAPPC2L, TRAPPC3, TRAPPC3L, TRAPPC4, TRAPPC5, TRAPPC8, TRAPPC9, TRAPPC10, TRAPPC11 and TRAPPC12 (By similarity). Directly interacts with IKBKB and MAP3K14.</text>
</comment>
<comment type="subcellular location">
    <subcellularLocation>
        <location evidence="1">Golgi apparatus</location>
        <location evidence="1">cis-Golgi network</location>
    </subcellularLocation>
    <subcellularLocation>
        <location evidence="1">Endoplasmic reticulum</location>
    </subcellularLocation>
    <subcellularLocation>
        <location evidence="8">Cytoplasm</location>
    </subcellularLocation>
    <text>Processes and cell bodies of neurons.</text>
</comment>
<comment type="alternative products">
    <event type="alternative splicing"/>
    <isoform>
        <id>Q3U0M1-1</id>
        <name>1</name>
        <sequence type="displayed"/>
    </isoform>
    <isoform>
        <id>Q3U0M1-2</id>
        <name>2</name>
        <sequence type="described" ref="VSP_034353"/>
    </isoform>
    <isoform>
        <id>Q3U0M1-3</id>
        <name>3</name>
        <sequence type="described" ref="VSP_034351 VSP_034352"/>
    </isoform>
    <isoform>
        <id>Q3U0M1-4</id>
        <name>4</name>
        <sequence type="described" ref="VSP_034353 VSP_034356"/>
    </isoform>
    <isoform>
        <id>Q3U0M1-5</id>
        <name>5</name>
        <sequence type="described" ref="VSP_034353 VSP_034354 VSP_034355"/>
    </isoform>
</comment>
<comment type="tissue specificity">
    <text evidence="3">Expressed in neurons of the pyramidal layer of the cortex, in spinal cord motor neurons and white matter neurons (at protein level).</text>
</comment>
<comment type="similarity">
    <text evidence="7">Belongs to the NIBP family.</text>
</comment>
<comment type="sequence caution" evidence="7">
    <conflict type="erroneous initiation">
        <sequence resource="EMBL-CDS" id="BAB25242"/>
    </conflict>
</comment>
<sequence>MSVPDYMQCAEDHQTLLVVVQAVGIVSEENFFRIYKRICSVSQLSVRDTQRALFIRYRHHYPPENNEWGDFQTHRKVVGLITITDCFSPKDWPQTFEKFHVQKEIYGSTLYDSRLFVFGLQGDVAEQPRPDVAFYPNYDDCDSVEKRIEDFIESLFIVLESKRLDRATDKSGDKIPLLCVPFEKKDFVGLDTDSRHYKKRCQGRMRKHVGDLCLQAGMLQDALVHYHMSVELLRSVNDFLWLGAALEGLCSASVIYHYPGGTGGKTGARRLQGSSLPSEAANRHRPGAQEVLIDPGALTTNGINPDTSTEIGRAKNCLSPEDIIDKYKEAISYYSKYKNAGVIELEACVKAVRVLAIQKRGMEASEFLQNAVYINLRQLSEEEKIQRYSILSELYELIGFHRKSAFFKRVAAMQCVAPSIAEPGWRACYKLLLETLPGYSLSLDPKDFSKGTHRGWAAVQMRLLHELVYASRRMGNPALSVRHLSFLLQTMLDFLSDQEKKDVTQSLENYTAKCPGTMEPITLPDGLTLPPVPFTKLPIVRCVKLLSLPTSLRPHKVKSLLGQSMSTKSPFIYSPIIAHNRGEERNKKIDFQWVQGDVCEVQLMVYNPMPFELRVENMGLLTSGVEFESLPAALSLPAESGLYPVTLVGVPQTTGMITVNGYHTTVFGVFSDCLLDNLPGLKTGGSTVEVIPALPRLQISTSLPRSARSLQPSAGDEIATNVSVQLYNGETQQLAVTLENIGLEPLEQLEVTSKLLTTKEKLYGDFLSWKLEETLAQFPLQPGKVATFTINIKAKLDFSCQENLLQDLSDDGISVSGFPLSSPFRQVVRPRVESRPTNPSEGSKTGDLGHVKTLEAVLNFKYSGGPGHVEGYYRNLSLGLHVEVEPSVFFTRVSTLPATSTRQCHLLLDVFNSTEHELTVCARNNSELVLHASECQRMAIQVDKFNFESVPESPGEKGHFANLKQLEEERQEARGLEISSKLDIRWRIPSLKRSGEASVEGLLNQLILEHLQLAPLQWDVLVDGQPCDCEVAAACQVGDPVRLEVRLTNRSPRSVGPFALTVVPFQDHQNGVHNYDLHDVISFVGSSTFYLDTVQPSGQSTCLGALLFLYTGDFFLNIRFHEDCKSKELPPSWVCLPSVHVRALGAQA</sequence>
<name>TPPC9_MOUSE</name>
<accession>Q3U0M1</accession>
<accession>Q3UU81</accession>
<accession>Q69Z79</accession>
<accession>Q6NS50</accession>
<accession>Q8CD01</accession>
<accession>Q8CFV8</accession>
<accession>Q9D8R6</accession>
<protein>
    <recommendedName>
        <fullName>Trafficking protein particle complex subunit 9</fullName>
    </recommendedName>
    <alternativeName>
        <fullName>NIK- and IKBKB-binding protein</fullName>
    </alternativeName>
</protein>
<evidence type="ECO:0000250" key="1"/>
<evidence type="ECO:0000250" key="2">
    <source>
        <dbReference type="UniProtKB" id="Q96Q05"/>
    </source>
</evidence>
<evidence type="ECO:0000269" key="3">
    <source>
    </source>
</evidence>
<evidence type="ECO:0000303" key="4">
    <source>
    </source>
</evidence>
<evidence type="ECO:0000303" key="5">
    <source>
    </source>
</evidence>
<evidence type="ECO:0000303" key="6">
    <source>
    </source>
</evidence>
<evidence type="ECO:0000305" key="7"/>
<evidence type="ECO:0000305" key="8">
    <source>
    </source>
</evidence>
<evidence type="ECO:0007744" key="9">
    <source>
    </source>
</evidence>
<gene>
    <name type="primary">Trappc9</name>
    <name type="synonym">Kiaa1882</name>
    <name type="synonym">Nibp</name>
</gene>
<proteinExistence type="evidence at protein level"/>
<dbReference type="EMBL" id="AY630620">
    <property type="protein sequence ID" value="AAV31909.1"/>
    <property type="molecule type" value="mRNA"/>
</dbReference>
<dbReference type="EMBL" id="AK007766">
    <property type="protein sequence ID" value="BAB25242.1"/>
    <property type="status" value="ALT_INIT"/>
    <property type="molecule type" value="mRNA"/>
</dbReference>
<dbReference type="EMBL" id="AK031788">
    <property type="protein sequence ID" value="BAC27550.1"/>
    <property type="molecule type" value="mRNA"/>
</dbReference>
<dbReference type="EMBL" id="AK138682">
    <property type="protein sequence ID" value="BAE23746.1"/>
    <property type="molecule type" value="mRNA"/>
</dbReference>
<dbReference type="EMBL" id="AK156739">
    <property type="protein sequence ID" value="BAE33831.1"/>
    <property type="molecule type" value="mRNA"/>
</dbReference>
<dbReference type="EMBL" id="BC034590">
    <property type="protein sequence ID" value="AAH34590.1"/>
    <property type="molecule type" value="mRNA"/>
</dbReference>
<dbReference type="EMBL" id="BC070463">
    <property type="protein sequence ID" value="AAH70463.1"/>
    <property type="molecule type" value="mRNA"/>
</dbReference>
<dbReference type="EMBL" id="AK173287">
    <property type="protein sequence ID" value="BAD32565.1"/>
    <property type="molecule type" value="mRNA"/>
</dbReference>
<dbReference type="CCDS" id="CCDS37095.1">
    <molecule id="Q3U0M1-2"/>
</dbReference>
<dbReference type="CCDS" id="CCDS37096.1">
    <molecule id="Q3U0M1-3"/>
</dbReference>
<dbReference type="CCDS" id="CCDS88775.1">
    <molecule id="Q3U0M1-5"/>
</dbReference>
<dbReference type="RefSeq" id="NP_001158113.1">
    <property type="nucleotide sequence ID" value="NM_001164641.1"/>
</dbReference>
<dbReference type="RefSeq" id="NP_001158114.1">
    <property type="nucleotide sequence ID" value="NM_001164642.1"/>
</dbReference>
<dbReference type="RefSeq" id="NP_001158115.1">
    <molecule id="Q3U0M1-5"/>
    <property type="nucleotide sequence ID" value="NM_001164643.1"/>
</dbReference>
<dbReference type="RefSeq" id="NP_083916.1">
    <molecule id="Q3U0M1-3"/>
    <property type="nucleotide sequence ID" value="NM_029640.2"/>
</dbReference>
<dbReference type="RefSeq" id="NP_850993.2">
    <molecule id="Q3U0M1-2"/>
    <property type="nucleotide sequence ID" value="NM_180662.2"/>
</dbReference>
<dbReference type="RefSeq" id="XP_006521590.1">
    <molecule id="Q3U0M1-1"/>
    <property type="nucleotide sequence ID" value="XM_006521527.5"/>
</dbReference>
<dbReference type="BioGRID" id="218162">
    <property type="interactions" value="7"/>
</dbReference>
<dbReference type="ComplexPortal" id="CPX-4764">
    <property type="entry name" value="TRAPP II complex"/>
</dbReference>
<dbReference type="FunCoup" id="Q3U0M1">
    <property type="interactions" value="2630"/>
</dbReference>
<dbReference type="IntAct" id="Q3U0M1">
    <property type="interactions" value="3"/>
</dbReference>
<dbReference type="MINT" id="Q3U0M1"/>
<dbReference type="STRING" id="10090.ENSMUSP00000087202"/>
<dbReference type="GlyGen" id="Q3U0M1">
    <property type="glycosylation" value="1 site, 1 N-linked glycan (1 site)"/>
</dbReference>
<dbReference type="iPTMnet" id="Q3U0M1"/>
<dbReference type="PhosphoSitePlus" id="Q3U0M1"/>
<dbReference type="SwissPalm" id="Q3U0M1"/>
<dbReference type="PaxDb" id="10090-ENSMUSP00000087202"/>
<dbReference type="PeptideAtlas" id="Q3U0M1"/>
<dbReference type="ProteomicsDB" id="259064">
    <molecule id="Q3U0M1-1"/>
</dbReference>
<dbReference type="ProteomicsDB" id="259065">
    <molecule id="Q3U0M1-2"/>
</dbReference>
<dbReference type="ProteomicsDB" id="259066">
    <molecule id="Q3U0M1-3"/>
</dbReference>
<dbReference type="ProteomicsDB" id="259067">
    <molecule id="Q3U0M1-4"/>
</dbReference>
<dbReference type="ProteomicsDB" id="259068">
    <molecule id="Q3U0M1-5"/>
</dbReference>
<dbReference type="Pumba" id="Q3U0M1"/>
<dbReference type="Antibodypedia" id="14382">
    <property type="antibodies" value="120 antibodies from 20 providers"/>
</dbReference>
<dbReference type="Ensembl" id="ENSMUST00000023276.16">
    <molecule id="Q3U0M1-3"/>
    <property type="protein sequence ID" value="ENSMUSP00000023276.9"/>
    <property type="gene ID" value="ENSMUSG00000047921.19"/>
</dbReference>
<dbReference type="Ensembl" id="ENSMUST00000089770.11">
    <molecule id="Q3U0M1-2"/>
    <property type="protein sequence ID" value="ENSMUSP00000087202.4"/>
    <property type="gene ID" value="ENSMUSG00000047921.19"/>
</dbReference>
<dbReference type="Ensembl" id="ENSMUST00000228960.2">
    <molecule id="Q3U0M1-5"/>
    <property type="protein sequence ID" value="ENSMUSP00000155105.2"/>
    <property type="gene ID" value="ENSMUSG00000047921.19"/>
</dbReference>
<dbReference type="GeneID" id="76510"/>
<dbReference type="KEGG" id="mmu:76510"/>
<dbReference type="UCSC" id="uc007wbl.2">
    <molecule id="Q3U0M1-3"/>
    <property type="organism name" value="mouse"/>
</dbReference>
<dbReference type="UCSC" id="uc007wbm.1">
    <molecule id="Q3U0M1-2"/>
    <property type="organism name" value="mouse"/>
</dbReference>
<dbReference type="UCSC" id="uc007wbp.1">
    <molecule id="Q3U0M1-4"/>
    <property type="organism name" value="mouse"/>
</dbReference>
<dbReference type="UCSC" id="uc011ztt.1">
    <molecule id="Q3U0M1-5"/>
    <property type="organism name" value="mouse"/>
</dbReference>
<dbReference type="AGR" id="MGI:1923760"/>
<dbReference type="CTD" id="83696"/>
<dbReference type="MGI" id="MGI:1923760">
    <property type="gene designation" value="Trappc9"/>
</dbReference>
<dbReference type="VEuPathDB" id="HostDB:ENSMUSG00000047921"/>
<dbReference type="eggNOG" id="KOG1953">
    <property type="taxonomic scope" value="Eukaryota"/>
</dbReference>
<dbReference type="GeneTree" id="ENSGT00390000006486"/>
<dbReference type="InParanoid" id="Q3U0M1"/>
<dbReference type="OMA" id="HHSCLLV"/>
<dbReference type="OrthoDB" id="8404at9989"/>
<dbReference type="PhylomeDB" id="Q3U0M1"/>
<dbReference type="TreeFam" id="TF314341"/>
<dbReference type="Reactome" id="R-MMU-204005">
    <property type="pathway name" value="COPII-mediated vesicle transport"/>
</dbReference>
<dbReference type="Reactome" id="R-MMU-8876198">
    <property type="pathway name" value="RAB GEFs exchange GTP for GDP on RABs"/>
</dbReference>
<dbReference type="BioGRID-ORCS" id="76510">
    <property type="hits" value="5 hits in 77 CRISPR screens"/>
</dbReference>
<dbReference type="CD-CODE" id="CE726F99">
    <property type="entry name" value="Postsynaptic density"/>
</dbReference>
<dbReference type="ChiTaRS" id="Trappc9">
    <property type="organism name" value="mouse"/>
</dbReference>
<dbReference type="PRO" id="PR:Q3U0M1"/>
<dbReference type="Proteomes" id="UP000000589">
    <property type="component" value="Chromosome 15"/>
</dbReference>
<dbReference type="RNAct" id="Q3U0M1">
    <property type="molecule type" value="protein"/>
</dbReference>
<dbReference type="Bgee" id="ENSMUSG00000047921">
    <property type="expression patterns" value="Expressed in retinal neural layer and 218 other cell types or tissues"/>
</dbReference>
<dbReference type="ExpressionAtlas" id="Q3U0M1">
    <property type="expression patterns" value="baseline and differential"/>
</dbReference>
<dbReference type="GO" id="GO:0005737">
    <property type="term" value="C:cytoplasm"/>
    <property type="evidence" value="ECO:0000314"/>
    <property type="project" value="MGI"/>
</dbReference>
<dbReference type="GO" id="GO:0005783">
    <property type="term" value="C:endoplasmic reticulum"/>
    <property type="evidence" value="ECO:0007669"/>
    <property type="project" value="UniProtKB-SubCell"/>
</dbReference>
<dbReference type="GO" id="GO:1990071">
    <property type="term" value="C:TRAPPII protein complex"/>
    <property type="evidence" value="ECO:0000303"/>
    <property type="project" value="ComplexPortal"/>
</dbReference>
<dbReference type="GO" id="GO:0021987">
    <property type="term" value="P:cerebral cortex development"/>
    <property type="evidence" value="ECO:0007669"/>
    <property type="project" value="Ensembl"/>
</dbReference>
<dbReference type="GO" id="GO:0006888">
    <property type="term" value="P:endoplasmic reticulum to Golgi vesicle-mediated transport"/>
    <property type="evidence" value="ECO:0000303"/>
    <property type="project" value="ComplexPortal"/>
</dbReference>
<dbReference type="GO" id="GO:0030182">
    <property type="term" value="P:neuron differentiation"/>
    <property type="evidence" value="ECO:0000315"/>
    <property type="project" value="MGI"/>
</dbReference>
<dbReference type="GO" id="GO:0006901">
    <property type="term" value="P:vesicle coating"/>
    <property type="evidence" value="ECO:0000303"/>
    <property type="project" value="ComplexPortal"/>
</dbReference>
<dbReference type="GO" id="GO:0099022">
    <property type="term" value="P:vesicle tethering"/>
    <property type="evidence" value="ECO:0000303"/>
    <property type="project" value="ComplexPortal"/>
</dbReference>
<dbReference type="InterPro" id="IPR013935">
    <property type="entry name" value="TRAPP_II_complex_Trs120"/>
</dbReference>
<dbReference type="PANTHER" id="PTHR21512">
    <property type="entry name" value="TRAFFICKING PROTEIN PARTICLE COMPLEX SUBUNIT 9"/>
    <property type="match status" value="1"/>
</dbReference>
<dbReference type="PANTHER" id="PTHR21512:SF5">
    <property type="entry name" value="TRAFFICKING PROTEIN PARTICLE COMPLEX SUBUNIT 9"/>
    <property type="match status" value="1"/>
</dbReference>
<dbReference type="Pfam" id="PF08626">
    <property type="entry name" value="TRAPPC9-Trs120"/>
    <property type="match status" value="2"/>
</dbReference>
<organism>
    <name type="scientific">Mus musculus</name>
    <name type="common">Mouse</name>
    <dbReference type="NCBI Taxonomy" id="10090"/>
    <lineage>
        <taxon>Eukaryota</taxon>
        <taxon>Metazoa</taxon>
        <taxon>Chordata</taxon>
        <taxon>Craniata</taxon>
        <taxon>Vertebrata</taxon>
        <taxon>Euteleostomi</taxon>
        <taxon>Mammalia</taxon>
        <taxon>Eutheria</taxon>
        <taxon>Euarchontoglires</taxon>
        <taxon>Glires</taxon>
        <taxon>Rodentia</taxon>
        <taxon>Myomorpha</taxon>
        <taxon>Muroidea</taxon>
        <taxon>Muridae</taxon>
        <taxon>Murinae</taxon>
        <taxon>Mus</taxon>
        <taxon>Mus</taxon>
    </lineage>
</organism>
<keyword id="KW-0025">Alternative splicing</keyword>
<keyword id="KW-0963">Cytoplasm</keyword>
<keyword id="KW-0221">Differentiation</keyword>
<keyword id="KW-0256">Endoplasmic reticulum</keyword>
<keyword id="KW-0333">Golgi apparatus</keyword>
<keyword id="KW-0597">Phosphoprotein</keyword>
<keyword id="KW-1185">Reference proteome</keyword>
<reference key="1">
    <citation type="journal article" date="2005" name="J. Biol. Chem.">
        <title>NIBP, a novel NIK and IKK(beta)-binding protein that enhances NF-(kappa)B activation.</title>
        <authorList>
            <person name="Hu W.-H."/>
            <person name="Pendergast J.S."/>
            <person name="Mo X.-M."/>
            <person name="Brambilla R."/>
            <person name="Bracchi-Ricard V."/>
            <person name="Li F."/>
            <person name="Walters W.M."/>
            <person name="Blits B."/>
            <person name="He L."/>
            <person name="Schaal S.M."/>
            <person name="Bethea J.R."/>
        </authorList>
    </citation>
    <scope>NUCLEOTIDE SEQUENCE [MRNA] (ISOFORM 3)</scope>
    <scope>FUNCTION</scope>
    <scope>INTERACTION WITH IKBKB AND MAP3K14</scope>
    <scope>SUBCELLULAR LOCATION</scope>
    <scope>TISSUE SPECIFICITY</scope>
    <source>
        <strain>C57BL/6J</strain>
        <tissue>Brain</tissue>
    </source>
</reference>
<reference key="2">
    <citation type="journal article" date="2005" name="Science">
        <title>The transcriptional landscape of the mammalian genome.</title>
        <authorList>
            <person name="Carninci P."/>
            <person name="Kasukawa T."/>
            <person name="Katayama S."/>
            <person name="Gough J."/>
            <person name="Frith M.C."/>
            <person name="Maeda N."/>
            <person name="Oyama R."/>
            <person name="Ravasi T."/>
            <person name="Lenhard B."/>
            <person name="Wells C."/>
            <person name="Kodzius R."/>
            <person name="Shimokawa K."/>
            <person name="Bajic V.B."/>
            <person name="Brenner S.E."/>
            <person name="Batalov S."/>
            <person name="Forrest A.R."/>
            <person name="Zavolan M."/>
            <person name="Davis M.J."/>
            <person name="Wilming L.G."/>
            <person name="Aidinis V."/>
            <person name="Allen J.E."/>
            <person name="Ambesi-Impiombato A."/>
            <person name="Apweiler R."/>
            <person name="Aturaliya R.N."/>
            <person name="Bailey T.L."/>
            <person name="Bansal M."/>
            <person name="Baxter L."/>
            <person name="Beisel K.W."/>
            <person name="Bersano T."/>
            <person name="Bono H."/>
            <person name="Chalk A.M."/>
            <person name="Chiu K.P."/>
            <person name="Choudhary V."/>
            <person name="Christoffels A."/>
            <person name="Clutterbuck D.R."/>
            <person name="Crowe M.L."/>
            <person name="Dalla E."/>
            <person name="Dalrymple B.P."/>
            <person name="de Bono B."/>
            <person name="Della Gatta G."/>
            <person name="di Bernardo D."/>
            <person name="Down T."/>
            <person name="Engstrom P."/>
            <person name="Fagiolini M."/>
            <person name="Faulkner G."/>
            <person name="Fletcher C.F."/>
            <person name="Fukushima T."/>
            <person name="Furuno M."/>
            <person name="Futaki S."/>
            <person name="Gariboldi M."/>
            <person name="Georgii-Hemming P."/>
            <person name="Gingeras T.R."/>
            <person name="Gojobori T."/>
            <person name="Green R.E."/>
            <person name="Gustincich S."/>
            <person name="Harbers M."/>
            <person name="Hayashi Y."/>
            <person name="Hensch T.K."/>
            <person name="Hirokawa N."/>
            <person name="Hill D."/>
            <person name="Huminiecki L."/>
            <person name="Iacono M."/>
            <person name="Ikeo K."/>
            <person name="Iwama A."/>
            <person name="Ishikawa T."/>
            <person name="Jakt M."/>
            <person name="Kanapin A."/>
            <person name="Katoh M."/>
            <person name="Kawasawa Y."/>
            <person name="Kelso J."/>
            <person name="Kitamura H."/>
            <person name="Kitano H."/>
            <person name="Kollias G."/>
            <person name="Krishnan S.P."/>
            <person name="Kruger A."/>
            <person name="Kummerfeld S.K."/>
            <person name="Kurochkin I.V."/>
            <person name="Lareau L.F."/>
            <person name="Lazarevic D."/>
            <person name="Lipovich L."/>
            <person name="Liu J."/>
            <person name="Liuni S."/>
            <person name="McWilliam S."/>
            <person name="Madan Babu M."/>
            <person name="Madera M."/>
            <person name="Marchionni L."/>
            <person name="Matsuda H."/>
            <person name="Matsuzawa S."/>
            <person name="Miki H."/>
            <person name="Mignone F."/>
            <person name="Miyake S."/>
            <person name="Morris K."/>
            <person name="Mottagui-Tabar S."/>
            <person name="Mulder N."/>
            <person name="Nakano N."/>
            <person name="Nakauchi H."/>
            <person name="Ng P."/>
            <person name="Nilsson R."/>
            <person name="Nishiguchi S."/>
            <person name="Nishikawa S."/>
            <person name="Nori F."/>
            <person name="Ohara O."/>
            <person name="Okazaki Y."/>
            <person name="Orlando V."/>
            <person name="Pang K.C."/>
            <person name="Pavan W.J."/>
            <person name="Pavesi G."/>
            <person name="Pesole G."/>
            <person name="Petrovsky N."/>
            <person name="Piazza S."/>
            <person name="Reed J."/>
            <person name="Reid J.F."/>
            <person name="Ring B.Z."/>
            <person name="Ringwald M."/>
            <person name="Rost B."/>
            <person name="Ruan Y."/>
            <person name="Salzberg S.L."/>
            <person name="Sandelin A."/>
            <person name="Schneider C."/>
            <person name="Schoenbach C."/>
            <person name="Sekiguchi K."/>
            <person name="Semple C.A."/>
            <person name="Seno S."/>
            <person name="Sessa L."/>
            <person name="Sheng Y."/>
            <person name="Shibata Y."/>
            <person name="Shimada H."/>
            <person name="Shimada K."/>
            <person name="Silva D."/>
            <person name="Sinclair B."/>
            <person name="Sperling S."/>
            <person name="Stupka E."/>
            <person name="Sugiura K."/>
            <person name="Sultana R."/>
            <person name="Takenaka Y."/>
            <person name="Taki K."/>
            <person name="Tammoja K."/>
            <person name="Tan S.L."/>
            <person name="Tang S."/>
            <person name="Taylor M.S."/>
            <person name="Tegner J."/>
            <person name="Teichmann S.A."/>
            <person name="Ueda H.R."/>
            <person name="van Nimwegen E."/>
            <person name="Verardo R."/>
            <person name="Wei C.L."/>
            <person name="Yagi K."/>
            <person name="Yamanishi H."/>
            <person name="Zabarovsky E."/>
            <person name="Zhu S."/>
            <person name="Zimmer A."/>
            <person name="Hide W."/>
            <person name="Bult C."/>
            <person name="Grimmond S.M."/>
            <person name="Teasdale R.D."/>
            <person name="Liu E.T."/>
            <person name="Brusic V."/>
            <person name="Quackenbush J."/>
            <person name="Wahlestedt C."/>
            <person name="Mattick J.S."/>
            <person name="Hume D.A."/>
            <person name="Kai C."/>
            <person name="Sasaki D."/>
            <person name="Tomaru Y."/>
            <person name="Fukuda S."/>
            <person name="Kanamori-Katayama M."/>
            <person name="Suzuki M."/>
            <person name="Aoki J."/>
            <person name="Arakawa T."/>
            <person name="Iida J."/>
            <person name="Imamura K."/>
            <person name="Itoh M."/>
            <person name="Kato T."/>
            <person name="Kawaji H."/>
            <person name="Kawagashira N."/>
            <person name="Kawashima T."/>
            <person name="Kojima M."/>
            <person name="Kondo S."/>
            <person name="Konno H."/>
            <person name="Nakano K."/>
            <person name="Ninomiya N."/>
            <person name="Nishio T."/>
            <person name="Okada M."/>
            <person name="Plessy C."/>
            <person name="Shibata K."/>
            <person name="Shiraki T."/>
            <person name="Suzuki S."/>
            <person name="Tagami M."/>
            <person name="Waki K."/>
            <person name="Watahiki A."/>
            <person name="Okamura-Oho Y."/>
            <person name="Suzuki H."/>
            <person name="Kawai J."/>
            <person name="Hayashizaki Y."/>
        </authorList>
    </citation>
    <scope>NUCLEOTIDE SEQUENCE [LARGE SCALE MRNA] (ISOFORMS 2; 4 AND 5)</scope>
    <source>
        <strain>C57BL/6J</strain>
        <strain>NOD</strain>
        <tissue>Head</tissue>
        <tissue>Pancreas</tissue>
        <tissue>Spleen</tissue>
        <tissue>Thymus</tissue>
    </source>
</reference>
<reference key="3">
    <citation type="journal article" date="2004" name="Genome Res.">
        <title>The status, quality, and expansion of the NIH full-length cDNA project: the Mammalian Gene Collection (MGC).</title>
        <authorList>
            <consortium name="The MGC Project Team"/>
        </authorList>
    </citation>
    <scope>NUCLEOTIDE SEQUENCE [LARGE SCALE MRNA] (ISOFORMS 2 AND 3)</scope>
    <source>
        <strain>C57BL/6J</strain>
        <tissue>Eye</tissue>
    </source>
</reference>
<reference key="4">
    <citation type="journal article" date="2004" name="DNA Res.">
        <title>Prediction of the coding sequences of mouse homologues of KIAA gene: IV. The complete nucleotide sequences of 500 mouse KIAA-homologous cDNAs identified by screening of terminal sequences of cDNA clones randomly sampled from size-fractionated libraries.</title>
        <authorList>
            <person name="Okazaki N."/>
            <person name="Kikuno R."/>
            <person name="Ohara R."/>
            <person name="Inamoto S."/>
            <person name="Koseki H."/>
            <person name="Hiraoka S."/>
            <person name="Saga Y."/>
            <person name="Seino S."/>
            <person name="Nishimura M."/>
            <person name="Kaisho T."/>
            <person name="Hoshino K."/>
            <person name="Kitamura H."/>
            <person name="Nagase T."/>
            <person name="Ohara O."/>
            <person name="Koga H."/>
        </authorList>
    </citation>
    <scope>NUCLEOTIDE SEQUENCE [LARGE SCALE MRNA] OF 593-1148 (ISOFORM 1)</scope>
    <source>
        <tissue>Spleen</tissue>
    </source>
</reference>
<reference key="5">
    <citation type="journal article" date="2010" name="Cell">
        <title>A tissue-specific atlas of mouse protein phosphorylation and expression.</title>
        <authorList>
            <person name="Huttlin E.L."/>
            <person name="Jedrychowski M.P."/>
            <person name="Elias J.E."/>
            <person name="Goswami T."/>
            <person name="Rad R."/>
            <person name="Beausoleil S.A."/>
            <person name="Villen J."/>
            <person name="Haas W."/>
            <person name="Sowa M.E."/>
            <person name="Gygi S.P."/>
        </authorList>
    </citation>
    <scope>PHOSPHORYLATION [LARGE SCALE ANALYSIS] AT SER-953</scope>
    <scope>IDENTIFICATION BY MASS SPECTROMETRY [LARGE SCALE ANALYSIS]</scope>
    <source>
        <tissue>Brain</tissue>
        <tissue>Brown adipose tissue</tissue>
        <tissue>Heart</tissue>
        <tissue>Kidney</tissue>
        <tissue>Lung</tissue>
        <tissue>Pancreas</tissue>
        <tissue>Spleen</tissue>
    </source>
</reference>
<feature type="chain" id="PRO_0000341587" description="Trafficking protein particle complex subunit 9">
    <location>
        <begin position="1"/>
        <end position="1148"/>
    </location>
</feature>
<feature type="modified residue" description="Phosphoserine" evidence="2">
    <location>
        <position position="566"/>
    </location>
</feature>
<feature type="modified residue" description="Phosphoserine" evidence="9">
    <location>
        <position position="953"/>
    </location>
</feature>
<feature type="splice variant" id="VSP_034351" description="In isoform 3." evidence="4 5">
    <location>
        <begin position="1"/>
        <end position="188"/>
    </location>
</feature>
<feature type="splice variant" id="VSP_034352" description="In isoform 3." evidence="4 5">
    <original>GLDTDS</original>
    <variation>MLLGLK</variation>
    <location>
        <begin position="189"/>
        <end position="194"/>
    </location>
</feature>
<feature type="splice variant" id="VSP_034353" description="In isoform 2, isoform 4 and isoform 5." evidence="4 6">
    <location>
        <begin position="286"/>
        <end position="294"/>
    </location>
</feature>
<feature type="splice variant" id="VSP_034354" description="In isoform 5." evidence="6">
    <original>EKKDV</original>
    <variation>ETLAT</variation>
    <location>
        <begin position="499"/>
        <end position="503"/>
    </location>
</feature>
<feature type="splice variant" id="VSP_034355" description="In isoform 5." evidence="6">
    <location>
        <begin position="504"/>
        <end position="1148"/>
    </location>
</feature>
<feature type="splice variant" id="VSP_034356" description="In isoform 4." evidence="6">
    <location>
        <begin position="706"/>
        <end position="1148"/>
    </location>
</feature>
<feature type="sequence conflict" description="In Ref. 3; AAH70463." evidence="7" ref="3">
    <original>E</original>
    <variation>D</variation>
    <location>
        <position position="773"/>
    </location>
</feature>